<feature type="signal peptide" evidence="2">
    <location>
        <begin position="1"/>
        <end position="24"/>
    </location>
</feature>
<feature type="chain" id="PRO_0000365017" description="Endothelial cell-specific chemotaxis regulator">
    <location>
        <begin position="25"/>
        <end position="205"/>
    </location>
</feature>
<feature type="topological domain" description="Extracellular" evidence="2">
    <location>
        <begin position="25"/>
        <end position="124"/>
    </location>
</feature>
<feature type="transmembrane region" description="Helical" evidence="2">
    <location>
        <begin position="125"/>
        <end position="145"/>
    </location>
</feature>
<feature type="topological domain" description="Cytoplasmic" evidence="2">
    <location>
        <begin position="146"/>
        <end position="205"/>
    </location>
</feature>
<feature type="region of interest" description="Disordered" evidence="3">
    <location>
        <begin position="49"/>
        <end position="101"/>
    </location>
</feature>
<feature type="region of interest" description="Disordered" evidence="3">
    <location>
        <begin position="153"/>
        <end position="175"/>
    </location>
</feature>
<feature type="compositionally biased region" description="Polar residues" evidence="3">
    <location>
        <begin position="49"/>
        <end position="71"/>
    </location>
</feature>
<feature type="compositionally biased region" description="Polar residues" evidence="3">
    <location>
        <begin position="86"/>
        <end position="101"/>
    </location>
</feature>
<feature type="compositionally biased region" description="Polar residues" evidence="3">
    <location>
        <begin position="163"/>
        <end position="175"/>
    </location>
</feature>
<feature type="modified residue" description="Phosphoserine" evidence="1">
    <location>
        <position position="198"/>
    </location>
</feature>
<feature type="sequence conflict" description="In Ref. 3; BAG65489." evidence="6" ref="3">
    <original>T</original>
    <variation>I</variation>
    <location>
        <position position="69"/>
    </location>
</feature>
<protein>
    <recommendedName>
        <fullName>Endothelial cell-specific chemotaxis regulator</fullName>
    </recommendedName>
    <alternativeName>
        <fullName>Apoptosis regulator through modulating IAP expression</fullName>
        <shortName>ARIA</shortName>
    </alternativeName>
    <alternativeName>
        <fullName>Endothelial cell-specific molecule 2</fullName>
    </alternativeName>
</protein>
<keyword id="KW-0037">Angiogenesis</keyword>
<keyword id="KW-0053">Apoptosis</keyword>
<keyword id="KW-1003">Cell membrane</keyword>
<keyword id="KW-0145">Chemotaxis</keyword>
<keyword id="KW-0963">Cytoplasm</keyword>
<keyword id="KW-0217">Developmental protein</keyword>
<keyword id="KW-0221">Differentiation</keyword>
<keyword id="KW-0325">Glycoprotein</keyword>
<keyword id="KW-0472">Membrane</keyword>
<keyword id="KW-0597">Phosphoprotein</keyword>
<keyword id="KW-1267">Proteomics identification</keyword>
<keyword id="KW-1185">Reference proteome</keyword>
<keyword id="KW-0732">Signal</keyword>
<keyword id="KW-0812">Transmembrane</keyword>
<keyword id="KW-1133">Transmembrane helix</keyword>
<proteinExistence type="evidence at protein level"/>
<accession>Q19T08</accession>
<accession>B4E3H7</accession>
<accession>C3RSF2</accession>
<name>ECSCR_HUMAN</name>
<organism>
    <name type="scientific">Homo sapiens</name>
    <name type="common">Human</name>
    <dbReference type="NCBI Taxonomy" id="9606"/>
    <lineage>
        <taxon>Eukaryota</taxon>
        <taxon>Metazoa</taxon>
        <taxon>Chordata</taxon>
        <taxon>Craniata</taxon>
        <taxon>Vertebrata</taxon>
        <taxon>Euteleostomi</taxon>
        <taxon>Mammalia</taxon>
        <taxon>Eutheria</taxon>
        <taxon>Euarchontoglires</taxon>
        <taxon>Primates</taxon>
        <taxon>Haplorrhini</taxon>
        <taxon>Catarrhini</taxon>
        <taxon>Hominidae</taxon>
        <taxon>Homo</taxon>
    </lineage>
</organism>
<reference key="1">
    <citation type="journal article" date="2008" name="Arterioscler. Thromb. Vasc. Biol.">
        <title>ECSM2, an endothelial specific filamin a binding protein that mediates chemotaxis.</title>
        <authorList>
            <person name="Armstrong L.-J."/>
            <person name="Heath V.L."/>
            <person name="Sanderson S."/>
            <person name="Kaur S."/>
            <person name="Beesley J.F.J."/>
            <person name="Herbert J.M.J."/>
            <person name="Legg J.A."/>
            <person name="Poulsom R."/>
            <person name="Bicknell R."/>
        </authorList>
    </citation>
    <scope>NUCLEOTIDE SEQUENCE [MRNA]</scope>
    <scope>FUNCTION</scope>
    <scope>GLYCOSYLATION</scope>
    <scope>INTERACTION WITH FLNA</scope>
    <scope>TISSUE SPECIFICITY</scope>
    <scope>SUBCELLULAR LOCATION</scope>
    <source>
        <tissue>Umbilical vein endothelial cell</tissue>
    </source>
</reference>
<reference key="2">
    <citation type="journal article" date="2009" name="Proc. Natl. Acad. Sci. U.S.A.">
        <title>Identification of ARIA regulating endothelial apoptosis and angiogenesis by modulating proteasomal degradation of cIAP-1 and cIAP-2.</title>
        <authorList>
            <person name="Ikeda K."/>
            <person name="Nakano R."/>
            <person name="Uraoka M."/>
            <person name="Nakagawa Y."/>
            <person name="Koide M."/>
            <person name="Katsume A."/>
            <person name="Minamino K."/>
            <person name="Yamada E."/>
            <person name="Yamada H."/>
            <person name="Quertermous T."/>
            <person name="Matsubara H."/>
        </authorList>
    </citation>
    <scope>NUCLEOTIDE SEQUENCE [MRNA]</scope>
    <scope>TISSUE SPECIFICITY</scope>
    <scope>FUNCTION</scope>
    <scope>SUBCELLULAR LOCATION</scope>
    <scope>INTERACTION WITH PSMA7</scope>
</reference>
<reference key="3">
    <citation type="journal article" date="2004" name="Nat. Genet.">
        <title>Complete sequencing and characterization of 21,243 full-length human cDNAs.</title>
        <authorList>
            <person name="Ota T."/>
            <person name="Suzuki Y."/>
            <person name="Nishikawa T."/>
            <person name="Otsuki T."/>
            <person name="Sugiyama T."/>
            <person name="Irie R."/>
            <person name="Wakamatsu A."/>
            <person name="Hayashi K."/>
            <person name="Sato H."/>
            <person name="Nagai K."/>
            <person name="Kimura K."/>
            <person name="Makita H."/>
            <person name="Sekine M."/>
            <person name="Obayashi M."/>
            <person name="Nishi T."/>
            <person name="Shibahara T."/>
            <person name="Tanaka T."/>
            <person name="Ishii S."/>
            <person name="Yamamoto J."/>
            <person name="Saito K."/>
            <person name="Kawai Y."/>
            <person name="Isono Y."/>
            <person name="Nakamura Y."/>
            <person name="Nagahari K."/>
            <person name="Murakami K."/>
            <person name="Yasuda T."/>
            <person name="Iwayanagi T."/>
            <person name="Wagatsuma M."/>
            <person name="Shiratori A."/>
            <person name="Sudo H."/>
            <person name="Hosoiri T."/>
            <person name="Kaku Y."/>
            <person name="Kodaira H."/>
            <person name="Kondo H."/>
            <person name="Sugawara M."/>
            <person name="Takahashi M."/>
            <person name="Kanda K."/>
            <person name="Yokoi T."/>
            <person name="Furuya T."/>
            <person name="Kikkawa E."/>
            <person name="Omura Y."/>
            <person name="Abe K."/>
            <person name="Kamihara K."/>
            <person name="Katsuta N."/>
            <person name="Sato K."/>
            <person name="Tanikawa M."/>
            <person name="Yamazaki M."/>
            <person name="Ninomiya K."/>
            <person name="Ishibashi T."/>
            <person name="Yamashita H."/>
            <person name="Murakawa K."/>
            <person name="Fujimori K."/>
            <person name="Tanai H."/>
            <person name="Kimata M."/>
            <person name="Watanabe M."/>
            <person name="Hiraoka S."/>
            <person name="Chiba Y."/>
            <person name="Ishida S."/>
            <person name="Ono Y."/>
            <person name="Takiguchi S."/>
            <person name="Watanabe S."/>
            <person name="Yosida M."/>
            <person name="Hotuta T."/>
            <person name="Kusano J."/>
            <person name="Kanehori K."/>
            <person name="Takahashi-Fujii A."/>
            <person name="Hara H."/>
            <person name="Tanase T.-O."/>
            <person name="Nomura Y."/>
            <person name="Togiya S."/>
            <person name="Komai F."/>
            <person name="Hara R."/>
            <person name="Takeuchi K."/>
            <person name="Arita M."/>
            <person name="Imose N."/>
            <person name="Musashino K."/>
            <person name="Yuuki H."/>
            <person name="Oshima A."/>
            <person name="Sasaki N."/>
            <person name="Aotsuka S."/>
            <person name="Yoshikawa Y."/>
            <person name="Matsunawa H."/>
            <person name="Ichihara T."/>
            <person name="Shiohata N."/>
            <person name="Sano S."/>
            <person name="Moriya S."/>
            <person name="Momiyama H."/>
            <person name="Satoh N."/>
            <person name="Takami S."/>
            <person name="Terashima Y."/>
            <person name="Suzuki O."/>
            <person name="Nakagawa S."/>
            <person name="Senoh A."/>
            <person name="Mizoguchi H."/>
            <person name="Goto Y."/>
            <person name="Shimizu F."/>
            <person name="Wakebe H."/>
            <person name="Hishigaki H."/>
            <person name="Watanabe T."/>
            <person name="Sugiyama A."/>
            <person name="Takemoto M."/>
            <person name="Kawakami B."/>
            <person name="Yamazaki M."/>
            <person name="Watanabe K."/>
            <person name="Kumagai A."/>
            <person name="Itakura S."/>
            <person name="Fukuzumi Y."/>
            <person name="Fujimori Y."/>
            <person name="Komiyama M."/>
            <person name="Tashiro H."/>
            <person name="Tanigami A."/>
            <person name="Fujiwara T."/>
            <person name="Ono T."/>
            <person name="Yamada K."/>
            <person name="Fujii Y."/>
            <person name="Ozaki K."/>
            <person name="Hirao M."/>
            <person name="Ohmori Y."/>
            <person name="Kawabata A."/>
            <person name="Hikiji T."/>
            <person name="Kobatake N."/>
            <person name="Inagaki H."/>
            <person name="Ikema Y."/>
            <person name="Okamoto S."/>
            <person name="Okitani R."/>
            <person name="Kawakami T."/>
            <person name="Noguchi S."/>
            <person name="Itoh T."/>
            <person name="Shigeta K."/>
            <person name="Senba T."/>
            <person name="Matsumura K."/>
            <person name="Nakajima Y."/>
            <person name="Mizuno T."/>
            <person name="Morinaga M."/>
            <person name="Sasaki M."/>
            <person name="Togashi T."/>
            <person name="Oyama M."/>
            <person name="Hata H."/>
            <person name="Watanabe M."/>
            <person name="Komatsu T."/>
            <person name="Mizushima-Sugano J."/>
            <person name="Satoh T."/>
            <person name="Shirai Y."/>
            <person name="Takahashi Y."/>
            <person name="Nakagawa K."/>
            <person name="Okumura K."/>
            <person name="Nagase T."/>
            <person name="Nomura N."/>
            <person name="Kikuchi H."/>
            <person name="Masuho Y."/>
            <person name="Yamashita R."/>
            <person name="Nakai K."/>
            <person name="Yada T."/>
            <person name="Nakamura Y."/>
            <person name="Ohara O."/>
            <person name="Isogai T."/>
            <person name="Sugano S."/>
        </authorList>
    </citation>
    <scope>NUCLEOTIDE SEQUENCE [LARGE SCALE MRNA]</scope>
    <source>
        <tissue>Uterus</tissue>
    </source>
</reference>
<reference key="4">
    <citation type="journal article" date="2004" name="Genome Res.">
        <title>The status, quality, and expansion of the NIH full-length cDNA project: the Mammalian Gene Collection (MGC).</title>
        <authorList>
            <consortium name="The MGC Project Team"/>
        </authorList>
    </citation>
    <scope>NUCLEOTIDE SEQUENCE [LARGE SCALE MRNA]</scope>
    <source>
        <tissue>Brain</tissue>
    </source>
</reference>
<comment type="function">
    <text evidence="4 5">Regulates endothelial chemotaxis and tube formation. Has a role in angiogenesis and apoptosis via modulation of the actin cytoskeleton and facilitation of proteasomal degradation of the apoptosis inhibitors BIRC3/IAP1 and BIRC2/IAP2.</text>
</comment>
<comment type="subunit">
    <text evidence="4 5">Interacts with FLNA. Interacts with the 20S proteasome subunit PSMA7.</text>
</comment>
<comment type="interaction">
    <interactant intactId="EBI-15778214">
        <id>Q19T08</id>
    </interactant>
    <interactant intactId="EBI-603272">
        <id>O14818</id>
        <label>PSMA7</label>
    </interactant>
    <organismsDiffer>false</organismsDiffer>
    <experiments>3</experiments>
</comment>
<comment type="interaction">
    <interactant intactId="EBI-15778214">
        <id>Q19T08</id>
    </interactant>
    <interactant intactId="EBI-15722967">
        <id>P60484-1</id>
        <label>PTEN</label>
    </interactant>
    <organismsDiffer>false</organismsDiffer>
    <experiments>4</experiments>
</comment>
<comment type="subcellular location">
    <subcellularLocation>
        <location>Cell membrane</location>
        <topology>Single-pass type I membrane protein</topology>
    </subcellularLocation>
    <subcellularLocation>
        <location>Cytoplasm</location>
    </subcellularLocation>
</comment>
<comment type="tissue specificity">
    <text evidence="4 5">Highest expression in endothelial cells. Also detected in vascular smooth muscle, macrophages, lymphocytes, and mast cells.</text>
</comment>
<comment type="PTM">
    <text evidence="4">May be heavily O-glycosylated.</text>
</comment>
<comment type="similarity">
    <text evidence="6">Belongs to the ECSCR family.</text>
</comment>
<gene>
    <name type="primary">ECSCR</name>
    <name type="synonym">ECSM2</name>
</gene>
<sequence>MGTAGAMQLCWVILGFLLFRGHNSQPTMTQTSSSQGGLGGLSLTTEPVSSNPGYIPSSEANRPSHLSSTGTPGAGVPSSGRDGGTSRDTFQTVPPNSTTMSLSMREDATILPSPTSETVLTVAAFGVISFIVILVVVVIILVGVVSLRFKCRKSKESEDPQKPGSSGLSESCSTANGEKDSITLISMKNINMNNGKQSLSAEKVL</sequence>
<evidence type="ECO:0000250" key="1">
    <source>
        <dbReference type="UniProtKB" id="Q3TZW0"/>
    </source>
</evidence>
<evidence type="ECO:0000255" key="2"/>
<evidence type="ECO:0000256" key="3">
    <source>
        <dbReference type="SAM" id="MobiDB-lite"/>
    </source>
</evidence>
<evidence type="ECO:0000269" key="4">
    <source>
    </source>
</evidence>
<evidence type="ECO:0000269" key="5">
    <source>
    </source>
</evidence>
<evidence type="ECO:0000305" key="6"/>
<dbReference type="EMBL" id="DQ462572">
    <property type="protein sequence ID" value="ABE73209.1"/>
    <property type="molecule type" value="mRNA"/>
</dbReference>
<dbReference type="EMBL" id="EU025066">
    <property type="protein sequence ID" value="ABW05062.1"/>
    <property type="molecule type" value="mRNA"/>
</dbReference>
<dbReference type="EMBL" id="AK304726">
    <property type="protein sequence ID" value="BAG65489.1"/>
    <property type="molecule type" value="mRNA"/>
</dbReference>
<dbReference type="EMBL" id="BC146912">
    <property type="protein sequence ID" value="AAI46913.1"/>
    <property type="molecule type" value="mRNA"/>
</dbReference>
<dbReference type="EMBL" id="BC146913">
    <property type="protein sequence ID" value="AAI46914.1"/>
    <property type="molecule type" value="mRNA"/>
</dbReference>
<dbReference type="CCDS" id="CCDS75317.1"/>
<dbReference type="RefSeq" id="NP_001071161.1">
    <property type="nucleotide sequence ID" value="NM_001077693.4"/>
</dbReference>
<dbReference type="RefSeq" id="NP_001280668.1">
    <property type="nucleotide sequence ID" value="NM_001293739.1"/>
</dbReference>
<dbReference type="BioGRID" id="567392">
    <property type="interactions" value="33"/>
</dbReference>
<dbReference type="CORUM" id="Q19T08"/>
<dbReference type="DIP" id="DIP-60344N"/>
<dbReference type="FunCoup" id="Q19T08">
    <property type="interactions" value="40"/>
</dbReference>
<dbReference type="IntAct" id="Q19T08">
    <property type="interactions" value="14"/>
</dbReference>
<dbReference type="STRING" id="9606.ENSP00000479243"/>
<dbReference type="GlyCosmos" id="Q19T08">
    <property type="glycosylation" value="3 sites, 3 glycans"/>
</dbReference>
<dbReference type="GlyGen" id="Q19T08">
    <property type="glycosylation" value="3 sites, 3 O-linked glycans (3 sites)"/>
</dbReference>
<dbReference type="iPTMnet" id="Q19T08"/>
<dbReference type="PhosphoSitePlus" id="Q19T08"/>
<dbReference type="BioMuta" id="ECSCR"/>
<dbReference type="DMDM" id="121940639"/>
<dbReference type="MassIVE" id="Q19T08"/>
<dbReference type="PaxDb" id="9606-ENSP00000479243"/>
<dbReference type="PeptideAtlas" id="Q19T08"/>
<dbReference type="ProteomicsDB" id="61198"/>
<dbReference type="Antibodypedia" id="66705">
    <property type="antibodies" value="99 antibodies from 16 providers"/>
</dbReference>
<dbReference type="DNASU" id="641700"/>
<dbReference type="Ensembl" id="ENST00000618155.3">
    <property type="protein sequence ID" value="ENSP00000479243.1"/>
    <property type="gene ID" value="ENSG00000249751.4"/>
</dbReference>
<dbReference type="Ensembl" id="ENST00000673382.1">
    <property type="protein sequence ID" value="ENSP00000500743.1"/>
    <property type="gene ID" value="ENSG00000288297.1"/>
</dbReference>
<dbReference type="GeneID" id="641700"/>
<dbReference type="KEGG" id="hsa:641700"/>
<dbReference type="MANE-Select" id="ENST00000618155.3">
    <property type="protein sequence ID" value="ENSP00000479243.1"/>
    <property type="RefSeq nucleotide sequence ID" value="NM_001077693.4"/>
    <property type="RefSeq protein sequence ID" value="NP_001071161.1"/>
</dbReference>
<dbReference type="UCSC" id="uc032vne.2">
    <property type="organism name" value="human"/>
</dbReference>
<dbReference type="AGR" id="HGNC:35454"/>
<dbReference type="CTD" id="641700"/>
<dbReference type="DisGeNET" id="641700"/>
<dbReference type="GeneCards" id="ECSCR"/>
<dbReference type="HGNC" id="HGNC:35454">
    <property type="gene designation" value="ECSCR"/>
</dbReference>
<dbReference type="HPA" id="ENSG00000249751">
    <property type="expression patterns" value="Low tissue specificity"/>
</dbReference>
<dbReference type="neXtProt" id="NX_Q19T08"/>
<dbReference type="OpenTargets" id="ENSG00000249751"/>
<dbReference type="PharmGKB" id="PA164718891"/>
<dbReference type="VEuPathDB" id="HostDB:ENSG00000249751"/>
<dbReference type="eggNOG" id="ENOG502S5MK">
    <property type="taxonomic scope" value="Eukaryota"/>
</dbReference>
<dbReference type="GeneTree" id="ENSGT00400000023549"/>
<dbReference type="HOGENOM" id="CLU_101826_1_0_1"/>
<dbReference type="InParanoid" id="Q19T08"/>
<dbReference type="OMA" id="AKPQMHT"/>
<dbReference type="OrthoDB" id="8960225at2759"/>
<dbReference type="PAN-GO" id="Q19T08">
    <property type="GO annotations" value="5 GO annotations based on evolutionary models"/>
</dbReference>
<dbReference type="PhylomeDB" id="Q19T08"/>
<dbReference type="PathwayCommons" id="Q19T08"/>
<dbReference type="SignaLink" id="Q19T08"/>
<dbReference type="BioGRID-ORCS" id="641700">
    <property type="hits" value="3 hits in 294 CRISPR screens"/>
</dbReference>
<dbReference type="ChiTaRS" id="ECSCR">
    <property type="organism name" value="human"/>
</dbReference>
<dbReference type="GenomeRNAi" id="641700"/>
<dbReference type="Pharos" id="Q19T08">
    <property type="development level" value="Tbio"/>
</dbReference>
<dbReference type="PRO" id="PR:Q19T08"/>
<dbReference type="Proteomes" id="UP000005640">
    <property type="component" value="Chromosome 5"/>
</dbReference>
<dbReference type="RNAct" id="Q19T08">
    <property type="molecule type" value="protein"/>
</dbReference>
<dbReference type="Bgee" id="ENSG00000249751">
    <property type="expression patterns" value="Expressed in upper lobe of left lung and 93 other cell types or tissues"/>
</dbReference>
<dbReference type="GO" id="GO:0005829">
    <property type="term" value="C:cytosol"/>
    <property type="evidence" value="ECO:0000314"/>
    <property type="project" value="MGI"/>
</dbReference>
<dbReference type="GO" id="GO:0043231">
    <property type="term" value="C:intracellular membrane-bounded organelle"/>
    <property type="evidence" value="ECO:0000314"/>
    <property type="project" value="HPA"/>
</dbReference>
<dbReference type="GO" id="GO:0005654">
    <property type="term" value="C:nucleoplasm"/>
    <property type="evidence" value="ECO:0000314"/>
    <property type="project" value="HPA"/>
</dbReference>
<dbReference type="GO" id="GO:0005886">
    <property type="term" value="C:plasma membrane"/>
    <property type="evidence" value="ECO:0000314"/>
    <property type="project" value="MGI"/>
</dbReference>
<dbReference type="GO" id="GO:0001525">
    <property type="term" value="P:angiogenesis"/>
    <property type="evidence" value="ECO:0007669"/>
    <property type="project" value="UniProtKB-KW"/>
</dbReference>
<dbReference type="GO" id="GO:0006915">
    <property type="term" value="P:apoptotic process"/>
    <property type="evidence" value="ECO:0007669"/>
    <property type="project" value="UniProtKB-KW"/>
</dbReference>
<dbReference type="GO" id="GO:0030154">
    <property type="term" value="P:cell differentiation"/>
    <property type="evidence" value="ECO:0007669"/>
    <property type="project" value="UniProtKB-KW"/>
</dbReference>
<dbReference type="GO" id="GO:0006935">
    <property type="term" value="P:chemotaxis"/>
    <property type="evidence" value="ECO:0007669"/>
    <property type="project" value="UniProtKB-KW"/>
</dbReference>
<dbReference type="GO" id="GO:0016525">
    <property type="term" value="P:negative regulation of angiogenesis"/>
    <property type="evidence" value="ECO:0000315"/>
    <property type="project" value="MGI"/>
</dbReference>
<dbReference type="GO" id="GO:2000353">
    <property type="term" value="P:positive regulation of endothelial cell apoptotic process"/>
    <property type="evidence" value="ECO:0000315"/>
    <property type="project" value="MGI"/>
</dbReference>
<dbReference type="GO" id="GO:1901800">
    <property type="term" value="P:positive regulation of proteasomal protein catabolic process"/>
    <property type="evidence" value="ECO:0000315"/>
    <property type="project" value="MGI"/>
</dbReference>
<dbReference type="InterPro" id="IPR026247">
    <property type="entry name" value="ECSCR"/>
</dbReference>
<dbReference type="PANTHER" id="PTHR28602">
    <property type="entry name" value="ENDOTHELIAL CELL-SPECIFIC CHEMOTAXIS REGULATOR"/>
    <property type="match status" value="1"/>
</dbReference>
<dbReference type="PANTHER" id="PTHR28602:SF1">
    <property type="entry name" value="ENDOTHELIAL CELL-SPECIFIC CHEMOTAXIS REGULATOR"/>
    <property type="match status" value="1"/>
</dbReference>
<dbReference type="Pfam" id="PF15820">
    <property type="entry name" value="ECSCR"/>
    <property type="match status" value="1"/>
</dbReference>
<dbReference type="PRINTS" id="PR02069">
    <property type="entry name" value="ECCREGULATOR"/>
</dbReference>